<protein>
    <recommendedName>
        <fullName evidence="1">Probable cytosol aminopeptidase</fullName>
        <ecNumber evidence="1">3.4.11.1</ecNumber>
    </recommendedName>
    <alternativeName>
        <fullName evidence="1">Leucine aminopeptidase</fullName>
        <shortName evidence="1">LAP</shortName>
        <ecNumber evidence="1">3.4.11.10</ecNumber>
    </alternativeName>
    <alternativeName>
        <fullName evidence="1">Leucyl aminopeptidase</fullName>
    </alternativeName>
</protein>
<feature type="chain" id="PRO_1000019909" description="Probable cytosol aminopeptidase">
    <location>
        <begin position="1"/>
        <end position="502"/>
    </location>
</feature>
<feature type="active site" evidence="1">
    <location>
        <position position="270"/>
    </location>
</feature>
<feature type="active site" evidence="1">
    <location>
        <position position="344"/>
    </location>
</feature>
<feature type="binding site" evidence="1">
    <location>
        <position position="258"/>
    </location>
    <ligand>
        <name>Mn(2+)</name>
        <dbReference type="ChEBI" id="CHEBI:29035"/>
        <label>2</label>
    </ligand>
</feature>
<feature type="binding site" evidence="1">
    <location>
        <position position="263"/>
    </location>
    <ligand>
        <name>Mn(2+)</name>
        <dbReference type="ChEBI" id="CHEBI:29035"/>
        <label>1</label>
    </ligand>
</feature>
<feature type="binding site" evidence="1">
    <location>
        <position position="263"/>
    </location>
    <ligand>
        <name>Mn(2+)</name>
        <dbReference type="ChEBI" id="CHEBI:29035"/>
        <label>2</label>
    </ligand>
</feature>
<feature type="binding site" evidence="1">
    <location>
        <position position="281"/>
    </location>
    <ligand>
        <name>Mn(2+)</name>
        <dbReference type="ChEBI" id="CHEBI:29035"/>
        <label>2</label>
    </ligand>
</feature>
<feature type="binding site" evidence="1">
    <location>
        <position position="340"/>
    </location>
    <ligand>
        <name>Mn(2+)</name>
        <dbReference type="ChEBI" id="CHEBI:29035"/>
        <label>1</label>
    </ligand>
</feature>
<feature type="binding site" evidence="1">
    <location>
        <position position="342"/>
    </location>
    <ligand>
        <name>Mn(2+)</name>
        <dbReference type="ChEBI" id="CHEBI:29035"/>
        <label>1</label>
    </ligand>
</feature>
<feature type="binding site" evidence="1">
    <location>
        <position position="342"/>
    </location>
    <ligand>
        <name>Mn(2+)</name>
        <dbReference type="ChEBI" id="CHEBI:29035"/>
        <label>2</label>
    </ligand>
</feature>
<proteinExistence type="inferred from homology"/>
<comment type="function">
    <text evidence="1">Presumably involved in the processing and regular turnover of intracellular proteins. Catalyzes the removal of unsubstituted N-terminal amino acids from various peptides.</text>
</comment>
<comment type="catalytic activity">
    <reaction evidence="1">
        <text>Release of an N-terminal amino acid, Xaa-|-Yaa-, in which Xaa is preferably Leu, but may be other amino acids including Pro although not Arg or Lys, and Yaa may be Pro. Amino acid amides and methyl esters are also readily hydrolyzed, but rates on arylamides are exceedingly low.</text>
        <dbReference type="EC" id="3.4.11.1"/>
    </reaction>
</comment>
<comment type="catalytic activity">
    <reaction evidence="1">
        <text>Release of an N-terminal amino acid, preferentially leucine, but not glutamic or aspartic acids.</text>
        <dbReference type="EC" id="3.4.11.10"/>
    </reaction>
</comment>
<comment type="cofactor">
    <cofactor evidence="1">
        <name>Mn(2+)</name>
        <dbReference type="ChEBI" id="CHEBI:29035"/>
    </cofactor>
    <text evidence="1">Binds 2 manganese ions per subunit.</text>
</comment>
<comment type="subcellular location">
    <subcellularLocation>
        <location evidence="1">Cytoplasm</location>
    </subcellularLocation>
</comment>
<comment type="similarity">
    <text evidence="1">Belongs to the peptidase M17 family.</text>
</comment>
<keyword id="KW-0031">Aminopeptidase</keyword>
<keyword id="KW-0963">Cytoplasm</keyword>
<keyword id="KW-0378">Hydrolase</keyword>
<keyword id="KW-0464">Manganese</keyword>
<keyword id="KW-0479">Metal-binding</keyword>
<keyword id="KW-0645">Protease</keyword>
<sequence length="502" mass="51492">MTLPLLSVSSDRAVDVEADALVVAVSSEKEGLRVHAPEGLEFDADGLSDIGVTGGRDEVVRIAGTGTAARTIAFVGVGSGPVDAVALRYAVGSATRQLRGVAHVAVAVPVSSLVDLTAVLEGAALGTYSFDAYRRDSLAGQKPRATAVTVLAQGDSWTADDADEAVAHATAVAGAVAGTKDLVNTPPLDLYPATFVDAVHERTAGLPVDVRVWDEVALAADGFGGILGVGQGSTRPPRLVKVAYSPAGATRHLALVGKGITYDTGGISLKPAVPMIGMKYDMTGAATILEVVVAAARLELPVRLTAWLCIAENMPSGSAIRPDDVLRMRGGTTVEVLNTDAEGRLVMADGIVAASEEHPDAIVDIATLTGAQVVALGERYSAVMGEDALVARLLDAAREQGESMWGMPLPEEMRALLNSDIADIANVKPGNPAGGMLVAGVFLKEFVGRTGDEDDAPRIPWAHVDIAGPSHNKGGGHGFTGKGPTGVAVRTLLALAAGFSRA</sequence>
<dbReference type="EC" id="3.4.11.1" evidence="1"/>
<dbReference type="EC" id="3.4.11.10" evidence="1"/>
<dbReference type="EMBL" id="AM711867">
    <property type="protein sequence ID" value="CAN01695.1"/>
    <property type="molecule type" value="Genomic_DNA"/>
</dbReference>
<dbReference type="RefSeq" id="WP_012038331.1">
    <property type="nucleotide sequence ID" value="NC_009480.1"/>
</dbReference>
<dbReference type="SMR" id="A5CRI6"/>
<dbReference type="KEGG" id="cmi:CMM_1643"/>
<dbReference type="eggNOG" id="COG0260">
    <property type="taxonomic scope" value="Bacteria"/>
</dbReference>
<dbReference type="HOGENOM" id="CLU_013734_2_2_11"/>
<dbReference type="OrthoDB" id="9809354at2"/>
<dbReference type="Proteomes" id="UP000001564">
    <property type="component" value="Chromosome"/>
</dbReference>
<dbReference type="GO" id="GO:0005737">
    <property type="term" value="C:cytoplasm"/>
    <property type="evidence" value="ECO:0007669"/>
    <property type="project" value="UniProtKB-SubCell"/>
</dbReference>
<dbReference type="GO" id="GO:0030145">
    <property type="term" value="F:manganese ion binding"/>
    <property type="evidence" value="ECO:0007669"/>
    <property type="project" value="UniProtKB-UniRule"/>
</dbReference>
<dbReference type="GO" id="GO:0070006">
    <property type="term" value="F:metalloaminopeptidase activity"/>
    <property type="evidence" value="ECO:0007669"/>
    <property type="project" value="InterPro"/>
</dbReference>
<dbReference type="GO" id="GO:0006508">
    <property type="term" value="P:proteolysis"/>
    <property type="evidence" value="ECO:0007669"/>
    <property type="project" value="UniProtKB-KW"/>
</dbReference>
<dbReference type="CDD" id="cd00433">
    <property type="entry name" value="Peptidase_M17"/>
    <property type="match status" value="1"/>
</dbReference>
<dbReference type="Gene3D" id="3.40.220.10">
    <property type="entry name" value="Leucine Aminopeptidase, subunit E, domain 1"/>
    <property type="match status" value="1"/>
</dbReference>
<dbReference type="Gene3D" id="3.40.630.10">
    <property type="entry name" value="Zn peptidases"/>
    <property type="match status" value="1"/>
</dbReference>
<dbReference type="HAMAP" id="MF_00181">
    <property type="entry name" value="Cytosol_peptidase_M17"/>
    <property type="match status" value="1"/>
</dbReference>
<dbReference type="InterPro" id="IPR011356">
    <property type="entry name" value="Leucine_aapep/pepB"/>
</dbReference>
<dbReference type="InterPro" id="IPR043472">
    <property type="entry name" value="Macro_dom-like"/>
</dbReference>
<dbReference type="InterPro" id="IPR000819">
    <property type="entry name" value="Peptidase_M17_C"/>
</dbReference>
<dbReference type="InterPro" id="IPR023042">
    <property type="entry name" value="Peptidase_M17_leu_NH2_pept"/>
</dbReference>
<dbReference type="InterPro" id="IPR008283">
    <property type="entry name" value="Peptidase_M17_N"/>
</dbReference>
<dbReference type="NCBIfam" id="NF002073">
    <property type="entry name" value="PRK00913.1-2"/>
    <property type="match status" value="1"/>
</dbReference>
<dbReference type="PANTHER" id="PTHR11963:SF23">
    <property type="entry name" value="CYTOSOL AMINOPEPTIDASE"/>
    <property type="match status" value="1"/>
</dbReference>
<dbReference type="PANTHER" id="PTHR11963">
    <property type="entry name" value="LEUCINE AMINOPEPTIDASE-RELATED"/>
    <property type="match status" value="1"/>
</dbReference>
<dbReference type="Pfam" id="PF00883">
    <property type="entry name" value="Peptidase_M17"/>
    <property type="match status" value="1"/>
</dbReference>
<dbReference type="Pfam" id="PF02789">
    <property type="entry name" value="Peptidase_M17_N"/>
    <property type="match status" value="1"/>
</dbReference>
<dbReference type="PRINTS" id="PR00481">
    <property type="entry name" value="LAMNOPPTDASE"/>
</dbReference>
<dbReference type="SUPFAM" id="SSF52949">
    <property type="entry name" value="Macro domain-like"/>
    <property type="match status" value="1"/>
</dbReference>
<dbReference type="SUPFAM" id="SSF53187">
    <property type="entry name" value="Zn-dependent exopeptidases"/>
    <property type="match status" value="1"/>
</dbReference>
<dbReference type="PROSITE" id="PS00631">
    <property type="entry name" value="CYTOSOL_AP"/>
    <property type="match status" value="1"/>
</dbReference>
<gene>
    <name evidence="1" type="primary">pepA</name>
    <name type="ordered locus">CMM_1643</name>
</gene>
<organism>
    <name type="scientific">Clavibacter michiganensis subsp. michiganensis (strain NCPPB 382)</name>
    <dbReference type="NCBI Taxonomy" id="443906"/>
    <lineage>
        <taxon>Bacteria</taxon>
        <taxon>Bacillati</taxon>
        <taxon>Actinomycetota</taxon>
        <taxon>Actinomycetes</taxon>
        <taxon>Micrococcales</taxon>
        <taxon>Microbacteriaceae</taxon>
        <taxon>Clavibacter</taxon>
    </lineage>
</organism>
<accession>A5CRI6</accession>
<name>AMPA_CLAM3</name>
<evidence type="ECO:0000255" key="1">
    <source>
        <dbReference type="HAMAP-Rule" id="MF_00181"/>
    </source>
</evidence>
<reference key="1">
    <citation type="journal article" date="2008" name="J. Bacteriol.">
        <title>The genome sequence of the tomato-pathogenic actinomycete Clavibacter michiganensis subsp. michiganensis NCPPB382 reveals a large island involved in pathogenicity.</title>
        <authorList>
            <person name="Gartemann K.-H."/>
            <person name="Abt B."/>
            <person name="Bekel T."/>
            <person name="Burger A."/>
            <person name="Engemann J."/>
            <person name="Fluegel M."/>
            <person name="Gaigalat L."/>
            <person name="Goesmann A."/>
            <person name="Graefen I."/>
            <person name="Kalinowski J."/>
            <person name="Kaup O."/>
            <person name="Kirchner O."/>
            <person name="Krause L."/>
            <person name="Linke B."/>
            <person name="McHardy A."/>
            <person name="Meyer F."/>
            <person name="Pohle S."/>
            <person name="Rueckert C."/>
            <person name="Schneiker S."/>
            <person name="Zellermann E.-M."/>
            <person name="Puehler A."/>
            <person name="Eichenlaub R."/>
            <person name="Kaiser O."/>
            <person name="Bartels D."/>
        </authorList>
    </citation>
    <scope>NUCLEOTIDE SEQUENCE [LARGE SCALE GENOMIC DNA]</scope>
    <source>
        <strain>NCPPB 382</strain>
    </source>
</reference>